<feature type="chain" id="PRO_0000082826" description="Peptide deformylase">
    <location>
        <begin position="1"/>
        <end position="176"/>
    </location>
</feature>
<feature type="active site" evidence="1">
    <location>
        <position position="137"/>
    </location>
</feature>
<feature type="binding site" evidence="1">
    <location>
        <position position="94"/>
    </location>
    <ligand>
        <name>Fe cation</name>
        <dbReference type="ChEBI" id="CHEBI:24875"/>
    </ligand>
</feature>
<feature type="binding site" evidence="1">
    <location>
        <position position="136"/>
    </location>
    <ligand>
        <name>Fe cation</name>
        <dbReference type="ChEBI" id="CHEBI:24875"/>
    </ligand>
</feature>
<feature type="binding site" evidence="1">
    <location>
        <position position="140"/>
    </location>
    <ligand>
        <name>Fe cation</name>
        <dbReference type="ChEBI" id="CHEBI:24875"/>
    </ligand>
</feature>
<evidence type="ECO:0000255" key="1">
    <source>
        <dbReference type="HAMAP-Rule" id="MF_00163"/>
    </source>
</evidence>
<proteinExistence type="inferred from homology"/>
<dbReference type="EC" id="3.5.1.88" evidence="1"/>
<dbReference type="EMBL" id="BA000012">
    <property type="protein sequence ID" value="BAB51419.1"/>
    <property type="molecule type" value="Genomic_DNA"/>
</dbReference>
<dbReference type="RefSeq" id="WP_010912760.1">
    <property type="nucleotide sequence ID" value="NC_002678.2"/>
</dbReference>
<dbReference type="SMR" id="Q98D52"/>
<dbReference type="GeneID" id="66680878"/>
<dbReference type="KEGG" id="mlo:mll4855"/>
<dbReference type="eggNOG" id="COG0242">
    <property type="taxonomic scope" value="Bacteria"/>
</dbReference>
<dbReference type="HOGENOM" id="CLU_061901_2_0_5"/>
<dbReference type="Proteomes" id="UP000000552">
    <property type="component" value="Chromosome"/>
</dbReference>
<dbReference type="GO" id="GO:0046872">
    <property type="term" value="F:metal ion binding"/>
    <property type="evidence" value="ECO:0007669"/>
    <property type="project" value="UniProtKB-KW"/>
</dbReference>
<dbReference type="GO" id="GO:0042586">
    <property type="term" value="F:peptide deformylase activity"/>
    <property type="evidence" value="ECO:0007669"/>
    <property type="project" value="UniProtKB-UniRule"/>
</dbReference>
<dbReference type="GO" id="GO:0043686">
    <property type="term" value="P:co-translational protein modification"/>
    <property type="evidence" value="ECO:0007669"/>
    <property type="project" value="TreeGrafter"/>
</dbReference>
<dbReference type="GO" id="GO:0006412">
    <property type="term" value="P:translation"/>
    <property type="evidence" value="ECO:0007669"/>
    <property type="project" value="UniProtKB-UniRule"/>
</dbReference>
<dbReference type="CDD" id="cd00487">
    <property type="entry name" value="Pep_deformylase"/>
    <property type="match status" value="1"/>
</dbReference>
<dbReference type="FunFam" id="3.90.45.10:FF:000005">
    <property type="entry name" value="Peptide deformylase"/>
    <property type="match status" value="1"/>
</dbReference>
<dbReference type="Gene3D" id="3.90.45.10">
    <property type="entry name" value="Peptide deformylase"/>
    <property type="match status" value="1"/>
</dbReference>
<dbReference type="HAMAP" id="MF_00163">
    <property type="entry name" value="Pep_deformylase"/>
    <property type="match status" value="1"/>
</dbReference>
<dbReference type="InterPro" id="IPR023635">
    <property type="entry name" value="Peptide_deformylase"/>
</dbReference>
<dbReference type="InterPro" id="IPR036821">
    <property type="entry name" value="Peptide_deformylase_sf"/>
</dbReference>
<dbReference type="NCBIfam" id="TIGR00079">
    <property type="entry name" value="pept_deformyl"/>
    <property type="match status" value="1"/>
</dbReference>
<dbReference type="NCBIfam" id="NF001159">
    <property type="entry name" value="PRK00150.1-3"/>
    <property type="match status" value="1"/>
</dbReference>
<dbReference type="PANTHER" id="PTHR10458">
    <property type="entry name" value="PEPTIDE DEFORMYLASE"/>
    <property type="match status" value="1"/>
</dbReference>
<dbReference type="PANTHER" id="PTHR10458:SF22">
    <property type="entry name" value="PEPTIDE DEFORMYLASE"/>
    <property type="match status" value="1"/>
</dbReference>
<dbReference type="Pfam" id="PF01327">
    <property type="entry name" value="Pep_deformylase"/>
    <property type="match status" value="1"/>
</dbReference>
<dbReference type="PIRSF" id="PIRSF004749">
    <property type="entry name" value="Pep_def"/>
    <property type="match status" value="1"/>
</dbReference>
<dbReference type="PRINTS" id="PR01576">
    <property type="entry name" value="PDEFORMYLASE"/>
</dbReference>
<dbReference type="SUPFAM" id="SSF56420">
    <property type="entry name" value="Peptide deformylase"/>
    <property type="match status" value="1"/>
</dbReference>
<organism>
    <name type="scientific">Mesorhizobium japonicum (strain LMG 29417 / CECT 9101 / MAFF 303099)</name>
    <name type="common">Mesorhizobium loti (strain MAFF 303099)</name>
    <dbReference type="NCBI Taxonomy" id="266835"/>
    <lineage>
        <taxon>Bacteria</taxon>
        <taxon>Pseudomonadati</taxon>
        <taxon>Pseudomonadota</taxon>
        <taxon>Alphaproteobacteria</taxon>
        <taxon>Hyphomicrobiales</taxon>
        <taxon>Phyllobacteriaceae</taxon>
        <taxon>Mesorhizobium</taxon>
    </lineage>
</organism>
<name>DEF_RHILO</name>
<sequence length="176" mass="19651">MPIKPLIILPDPILRQVSKPVERVDAPLRKLADDMLATMYDAPGIGLAAIQIGEPLRMLVIDLAKEDETPAPHVFINPEILESAEARSVYEEGCLSIPDYYAEVERPASVRVKYLDRDGKLQEMEAEGLMATCLQHEIDHLNGVLFIDHISKLKRDMVVKKFKKLAKDKAPGKLVG</sequence>
<reference key="1">
    <citation type="journal article" date="2000" name="DNA Res.">
        <title>Complete genome structure of the nitrogen-fixing symbiotic bacterium Mesorhizobium loti.</title>
        <authorList>
            <person name="Kaneko T."/>
            <person name="Nakamura Y."/>
            <person name="Sato S."/>
            <person name="Asamizu E."/>
            <person name="Kato T."/>
            <person name="Sasamoto S."/>
            <person name="Watanabe A."/>
            <person name="Idesawa K."/>
            <person name="Ishikawa A."/>
            <person name="Kawashima K."/>
            <person name="Kimura T."/>
            <person name="Kishida Y."/>
            <person name="Kiyokawa C."/>
            <person name="Kohara M."/>
            <person name="Matsumoto M."/>
            <person name="Matsuno A."/>
            <person name="Mochizuki Y."/>
            <person name="Nakayama S."/>
            <person name="Nakazaki N."/>
            <person name="Shimpo S."/>
            <person name="Sugimoto M."/>
            <person name="Takeuchi C."/>
            <person name="Yamada M."/>
            <person name="Tabata S."/>
        </authorList>
    </citation>
    <scope>NUCLEOTIDE SEQUENCE [LARGE SCALE GENOMIC DNA]</scope>
    <source>
        <strain>LMG 29417 / CECT 9101 / MAFF 303099</strain>
    </source>
</reference>
<protein>
    <recommendedName>
        <fullName evidence="1">Peptide deformylase</fullName>
        <shortName evidence="1">PDF</shortName>
        <ecNumber evidence="1">3.5.1.88</ecNumber>
    </recommendedName>
    <alternativeName>
        <fullName evidence="1">Polypeptide deformylase</fullName>
    </alternativeName>
</protein>
<comment type="function">
    <text evidence="1">Removes the formyl group from the N-terminal Met of newly synthesized proteins. Requires at least a dipeptide for an efficient rate of reaction. N-terminal L-methionine is a prerequisite for activity but the enzyme has broad specificity at other positions.</text>
</comment>
<comment type="catalytic activity">
    <reaction evidence="1">
        <text>N-terminal N-formyl-L-methionyl-[peptide] + H2O = N-terminal L-methionyl-[peptide] + formate</text>
        <dbReference type="Rhea" id="RHEA:24420"/>
        <dbReference type="Rhea" id="RHEA-COMP:10639"/>
        <dbReference type="Rhea" id="RHEA-COMP:10640"/>
        <dbReference type="ChEBI" id="CHEBI:15377"/>
        <dbReference type="ChEBI" id="CHEBI:15740"/>
        <dbReference type="ChEBI" id="CHEBI:49298"/>
        <dbReference type="ChEBI" id="CHEBI:64731"/>
        <dbReference type="EC" id="3.5.1.88"/>
    </reaction>
</comment>
<comment type="cofactor">
    <cofactor evidence="1">
        <name>Fe(2+)</name>
        <dbReference type="ChEBI" id="CHEBI:29033"/>
    </cofactor>
    <text evidence="1">Binds 1 Fe(2+) ion.</text>
</comment>
<comment type="similarity">
    <text evidence="1">Belongs to the polypeptide deformylase family.</text>
</comment>
<accession>Q98D52</accession>
<gene>
    <name evidence="1" type="primary">def</name>
    <name type="ordered locus">mll4855</name>
</gene>
<keyword id="KW-0378">Hydrolase</keyword>
<keyword id="KW-0408">Iron</keyword>
<keyword id="KW-0479">Metal-binding</keyword>
<keyword id="KW-0648">Protein biosynthesis</keyword>